<name>RS17_BACCZ</name>
<accession>Q63H81</accession>
<proteinExistence type="inferred from homology"/>
<dbReference type="EMBL" id="CP000001">
    <property type="protein sequence ID" value="AAU20119.1"/>
    <property type="molecule type" value="Genomic_DNA"/>
</dbReference>
<dbReference type="RefSeq" id="WP_000004106.1">
    <property type="nucleotide sequence ID" value="NZ_CP009968.1"/>
</dbReference>
<dbReference type="SMR" id="Q63H81"/>
<dbReference type="GeneID" id="93010934"/>
<dbReference type="KEGG" id="bcz:BCE33L0113"/>
<dbReference type="PATRIC" id="fig|288681.22.peg.38"/>
<dbReference type="Proteomes" id="UP000002612">
    <property type="component" value="Chromosome"/>
</dbReference>
<dbReference type="GO" id="GO:0022627">
    <property type="term" value="C:cytosolic small ribosomal subunit"/>
    <property type="evidence" value="ECO:0007669"/>
    <property type="project" value="TreeGrafter"/>
</dbReference>
<dbReference type="GO" id="GO:0019843">
    <property type="term" value="F:rRNA binding"/>
    <property type="evidence" value="ECO:0007669"/>
    <property type="project" value="UniProtKB-UniRule"/>
</dbReference>
<dbReference type="GO" id="GO:0003735">
    <property type="term" value="F:structural constituent of ribosome"/>
    <property type="evidence" value="ECO:0007669"/>
    <property type="project" value="InterPro"/>
</dbReference>
<dbReference type="GO" id="GO:0006412">
    <property type="term" value="P:translation"/>
    <property type="evidence" value="ECO:0007669"/>
    <property type="project" value="UniProtKB-UniRule"/>
</dbReference>
<dbReference type="CDD" id="cd00364">
    <property type="entry name" value="Ribosomal_uS17"/>
    <property type="match status" value="1"/>
</dbReference>
<dbReference type="FunFam" id="2.40.50.140:FF:000026">
    <property type="entry name" value="30S ribosomal protein S17"/>
    <property type="match status" value="1"/>
</dbReference>
<dbReference type="Gene3D" id="2.40.50.140">
    <property type="entry name" value="Nucleic acid-binding proteins"/>
    <property type="match status" value="1"/>
</dbReference>
<dbReference type="HAMAP" id="MF_01345_B">
    <property type="entry name" value="Ribosomal_uS17_B"/>
    <property type="match status" value="1"/>
</dbReference>
<dbReference type="InterPro" id="IPR012340">
    <property type="entry name" value="NA-bd_OB-fold"/>
</dbReference>
<dbReference type="InterPro" id="IPR000266">
    <property type="entry name" value="Ribosomal_uS17"/>
</dbReference>
<dbReference type="InterPro" id="IPR019984">
    <property type="entry name" value="Ribosomal_uS17_bact/chlr"/>
</dbReference>
<dbReference type="InterPro" id="IPR019979">
    <property type="entry name" value="Ribosomal_uS17_CS"/>
</dbReference>
<dbReference type="NCBIfam" id="NF004123">
    <property type="entry name" value="PRK05610.1"/>
    <property type="match status" value="1"/>
</dbReference>
<dbReference type="NCBIfam" id="TIGR03635">
    <property type="entry name" value="uS17_bact"/>
    <property type="match status" value="1"/>
</dbReference>
<dbReference type="PANTHER" id="PTHR10744">
    <property type="entry name" value="40S RIBOSOMAL PROTEIN S11 FAMILY MEMBER"/>
    <property type="match status" value="1"/>
</dbReference>
<dbReference type="PANTHER" id="PTHR10744:SF1">
    <property type="entry name" value="SMALL RIBOSOMAL SUBUNIT PROTEIN US17M"/>
    <property type="match status" value="1"/>
</dbReference>
<dbReference type="Pfam" id="PF00366">
    <property type="entry name" value="Ribosomal_S17"/>
    <property type="match status" value="1"/>
</dbReference>
<dbReference type="PRINTS" id="PR00973">
    <property type="entry name" value="RIBOSOMALS17"/>
</dbReference>
<dbReference type="SUPFAM" id="SSF50249">
    <property type="entry name" value="Nucleic acid-binding proteins"/>
    <property type="match status" value="1"/>
</dbReference>
<dbReference type="PROSITE" id="PS00056">
    <property type="entry name" value="RIBOSOMAL_S17"/>
    <property type="match status" value="1"/>
</dbReference>
<sequence>MSERNQRKVYTGRVVSDKMDKTITVLVETYKTHSLYGKRVKYSKKYKAHDEQNQAKLGDIVKIMETRPLSATKRFRLVEIVEEAVII</sequence>
<feature type="chain" id="PRO_0000233421" description="Small ribosomal subunit protein uS17">
    <location>
        <begin position="1"/>
        <end position="87"/>
    </location>
</feature>
<protein>
    <recommendedName>
        <fullName evidence="1">Small ribosomal subunit protein uS17</fullName>
    </recommendedName>
    <alternativeName>
        <fullName evidence="2">30S ribosomal protein S17</fullName>
    </alternativeName>
</protein>
<evidence type="ECO:0000255" key="1">
    <source>
        <dbReference type="HAMAP-Rule" id="MF_01345"/>
    </source>
</evidence>
<evidence type="ECO:0000305" key="2"/>
<comment type="function">
    <text evidence="1">One of the primary rRNA binding proteins, it binds specifically to the 5'-end of 16S ribosomal RNA.</text>
</comment>
<comment type="subunit">
    <text evidence="1">Part of the 30S ribosomal subunit.</text>
</comment>
<comment type="similarity">
    <text evidence="1">Belongs to the universal ribosomal protein uS17 family.</text>
</comment>
<reference key="1">
    <citation type="journal article" date="2006" name="J. Bacteriol.">
        <title>Pathogenomic sequence analysis of Bacillus cereus and Bacillus thuringiensis isolates closely related to Bacillus anthracis.</title>
        <authorList>
            <person name="Han C.S."/>
            <person name="Xie G."/>
            <person name="Challacombe J.F."/>
            <person name="Altherr M.R."/>
            <person name="Bhotika S.S."/>
            <person name="Bruce D."/>
            <person name="Campbell C.S."/>
            <person name="Campbell M.L."/>
            <person name="Chen J."/>
            <person name="Chertkov O."/>
            <person name="Cleland C."/>
            <person name="Dimitrijevic M."/>
            <person name="Doggett N.A."/>
            <person name="Fawcett J.J."/>
            <person name="Glavina T."/>
            <person name="Goodwin L.A."/>
            <person name="Hill K.K."/>
            <person name="Hitchcock P."/>
            <person name="Jackson P.J."/>
            <person name="Keim P."/>
            <person name="Kewalramani A.R."/>
            <person name="Longmire J."/>
            <person name="Lucas S."/>
            <person name="Malfatti S."/>
            <person name="McMurry K."/>
            <person name="Meincke L.J."/>
            <person name="Misra M."/>
            <person name="Moseman B.L."/>
            <person name="Mundt M."/>
            <person name="Munk A.C."/>
            <person name="Okinaka R.T."/>
            <person name="Parson-Quintana B."/>
            <person name="Reilly L.P."/>
            <person name="Richardson P."/>
            <person name="Robinson D.L."/>
            <person name="Rubin E."/>
            <person name="Saunders E."/>
            <person name="Tapia R."/>
            <person name="Tesmer J.G."/>
            <person name="Thayer N."/>
            <person name="Thompson L.S."/>
            <person name="Tice H."/>
            <person name="Ticknor L.O."/>
            <person name="Wills P.L."/>
            <person name="Brettin T.S."/>
            <person name="Gilna P."/>
        </authorList>
    </citation>
    <scope>NUCLEOTIDE SEQUENCE [LARGE SCALE GENOMIC DNA]</scope>
    <source>
        <strain>ZK / E33L</strain>
    </source>
</reference>
<keyword id="KW-0687">Ribonucleoprotein</keyword>
<keyword id="KW-0689">Ribosomal protein</keyword>
<keyword id="KW-0694">RNA-binding</keyword>
<keyword id="KW-0699">rRNA-binding</keyword>
<gene>
    <name evidence="1" type="primary">rpsQ</name>
    <name type="ordered locus">BCE33L0113</name>
</gene>
<organism>
    <name type="scientific">Bacillus cereus (strain ZK / E33L)</name>
    <dbReference type="NCBI Taxonomy" id="288681"/>
    <lineage>
        <taxon>Bacteria</taxon>
        <taxon>Bacillati</taxon>
        <taxon>Bacillota</taxon>
        <taxon>Bacilli</taxon>
        <taxon>Bacillales</taxon>
        <taxon>Bacillaceae</taxon>
        <taxon>Bacillus</taxon>
        <taxon>Bacillus cereus group</taxon>
    </lineage>
</organism>